<organism>
    <name type="scientific">Mycoplasma pneumoniae (strain ATCC 29342 / M129 / Subtype 1)</name>
    <name type="common">Mycoplasmoides pneumoniae</name>
    <dbReference type="NCBI Taxonomy" id="272634"/>
    <lineage>
        <taxon>Bacteria</taxon>
        <taxon>Bacillati</taxon>
        <taxon>Mycoplasmatota</taxon>
        <taxon>Mycoplasmoidales</taxon>
        <taxon>Mycoplasmoidaceae</taxon>
        <taxon>Mycoplasmoides</taxon>
    </lineage>
</organism>
<gene>
    <name evidence="1" type="primary">rplE</name>
    <name type="ordered locus">MPN_177</name>
    <name type="ORF">MP654</name>
</gene>
<accession>Q50306</accession>
<keyword id="KW-0002">3D-structure</keyword>
<keyword id="KW-1185">Reference proteome</keyword>
<keyword id="KW-0687">Ribonucleoprotein</keyword>
<keyword id="KW-0689">Ribosomal protein</keyword>
<keyword id="KW-0694">RNA-binding</keyword>
<keyword id="KW-0699">rRNA-binding</keyword>
<keyword id="KW-0820">tRNA-binding</keyword>
<protein>
    <recommendedName>
        <fullName evidence="1">Large ribosomal subunit protein uL5</fullName>
    </recommendedName>
    <alternativeName>
        <fullName evidence="2">50S ribosomal protein L5</fullName>
    </alternativeName>
</protein>
<sequence length="180" mass="20240">MNNLKAHYQKTIAKELQKSFAFSSIMQVPRLEKIVINMGVGDAIRDSKFLESALNELHLISGQKPVATKAKNAISTYKLRAGQLIGCKVTLRGERMWAFLEKLIYVALPRVRDFRGLSLKSFDGRGNYTIGIKEQIIFPEIVYDDIKRIRGFDVTLVTSTNKDSEALALLRALNLPLVKG</sequence>
<name>RL5_MYCPN</name>
<comment type="function">
    <text evidence="1">This is one of the proteins that bind and probably mediate the attachment of the 5S RNA into the large ribosomal subunit, where it forms part of the central protuberance. In the 70S ribosome it contacts protein S13 of the 30S subunit (bridge B1b), connecting the 2 subunits; this bridge is implicated in subunit movement. Contacts the P site tRNA; the 5S rRNA and some of its associated proteins might help stabilize positioning of ribosome-bound tRNAs.</text>
</comment>
<comment type="subunit">
    <text evidence="1">Part of the 50S ribosomal subunit; part of the 5S rRNA/L5/L18/L25 subcomplex. Contacts the 5S rRNA and the P site tRNA. Forms a bridge to the 30S subunit in the 70S ribosome.</text>
</comment>
<comment type="similarity">
    <text evidence="1">Belongs to the universal ribosomal protein uL5 family.</text>
</comment>
<evidence type="ECO:0000255" key="1">
    <source>
        <dbReference type="HAMAP-Rule" id="MF_01333"/>
    </source>
</evidence>
<evidence type="ECO:0000305" key="2"/>
<evidence type="ECO:0007829" key="3">
    <source>
        <dbReference type="PDB" id="7OOD"/>
    </source>
</evidence>
<evidence type="ECO:0007829" key="4">
    <source>
        <dbReference type="PDB" id="8P8B"/>
    </source>
</evidence>
<dbReference type="EMBL" id="U34795">
    <property type="protein sequence ID" value="AAC43704.1"/>
    <property type="molecule type" value="Genomic_DNA"/>
</dbReference>
<dbReference type="EMBL" id="U00089">
    <property type="protein sequence ID" value="AAB96302.1"/>
    <property type="molecule type" value="Genomic_DNA"/>
</dbReference>
<dbReference type="PIR" id="S62829">
    <property type="entry name" value="S62829"/>
</dbReference>
<dbReference type="RefSeq" id="NP_109865.1">
    <property type="nucleotide sequence ID" value="NC_000912.1"/>
</dbReference>
<dbReference type="RefSeq" id="WP_010874534.1">
    <property type="nucleotide sequence ID" value="NZ_OU342337.1"/>
</dbReference>
<dbReference type="PDB" id="7OOD">
    <property type="method" value="EM"/>
    <property type="resolution" value="3.40 A"/>
    <property type="chains" value="d=1-180"/>
</dbReference>
<dbReference type="PDB" id="7P6Z">
    <property type="method" value="EM"/>
    <property type="resolution" value="3.50 A"/>
    <property type="chains" value="d=1-180"/>
</dbReference>
<dbReference type="PDB" id="7PAH">
    <property type="method" value="EM"/>
    <property type="resolution" value="9.50 A"/>
    <property type="chains" value="d=1-180"/>
</dbReference>
<dbReference type="PDB" id="7PAI">
    <property type="method" value="EM"/>
    <property type="resolution" value="6.70 A"/>
    <property type="chains" value="d=1-180"/>
</dbReference>
<dbReference type="PDB" id="7PAJ">
    <property type="method" value="EM"/>
    <property type="resolution" value="7.30 A"/>
    <property type="chains" value="d=1-180"/>
</dbReference>
<dbReference type="PDB" id="7PAK">
    <property type="method" value="EM"/>
    <property type="resolution" value="5.30 A"/>
    <property type="chains" value="d=1-180"/>
</dbReference>
<dbReference type="PDB" id="7PAL">
    <property type="method" value="EM"/>
    <property type="resolution" value="4.70 A"/>
    <property type="chains" value="d=1-180"/>
</dbReference>
<dbReference type="PDB" id="7PAM">
    <property type="method" value="EM"/>
    <property type="resolution" value="6.80 A"/>
    <property type="chains" value="d=1-180"/>
</dbReference>
<dbReference type="PDB" id="7PAN">
    <property type="method" value="EM"/>
    <property type="resolution" value="9.70 A"/>
    <property type="chains" value="d=1-180"/>
</dbReference>
<dbReference type="PDB" id="7PAO">
    <property type="method" value="EM"/>
    <property type="resolution" value="7.00 A"/>
    <property type="chains" value="d=1-180"/>
</dbReference>
<dbReference type="PDB" id="7PAQ">
    <property type="method" value="EM"/>
    <property type="resolution" value="8.90 A"/>
    <property type="chains" value="d=1-180"/>
</dbReference>
<dbReference type="PDB" id="7PAR">
    <property type="method" value="EM"/>
    <property type="resolution" value="8.20 A"/>
    <property type="chains" value="d=1-180"/>
</dbReference>
<dbReference type="PDB" id="7PAS">
    <property type="method" value="EM"/>
    <property type="resolution" value="16.00 A"/>
    <property type="chains" value="d=1-180"/>
</dbReference>
<dbReference type="PDB" id="7PAT">
    <property type="method" value="EM"/>
    <property type="resolution" value="9.20 A"/>
    <property type="chains" value="d=1-180"/>
</dbReference>
<dbReference type="PDB" id="7PAU">
    <property type="method" value="EM"/>
    <property type="resolution" value="8.30 A"/>
    <property type="chains" value="d=1-180"/>
</dbReference>
<dbReference type="PDB" id="7PH9">
    <property type="method" value="EM"/>
    <property type="resolution" value="8.70 A"/>
    <property type="chains" value="d=1-180"/>
</dbReference>
<dbReference type="PDB" id="7PHA">
    <property type="method" value="EM"/>
    <property type="resolution" value="8.50 A"/>
    <property type="chains" value="d=1-180"/>
</dbReference>
<dbReference type="PDB" id="7PHB">
    <property type="method" value="EM"/>
    <property type="resolution" value="4.90 A"/>
    <property type="chains" value="d=1-180"/>
</dbReference>
<dbReference type="PDB" id="7PHC">
    <property type="method" value="EM"/>
    <property type="resolution" value="9.90 A"/>
    <property type="chains" value="d=1-180"/>
</dbReference>
<dbReference type="PDB" id="7PI8">
    <property type="method" value="EM"/>
    <property type="resolution" value="8.90 A"/>
    <property type="chains" value="d=1-180"/>
</dbReference>
<dbReference type="PDB" id="7PI9">
    <property type="method" value="EM"/>
    <property type="resolution" value="6.30 A"/>
    <property type="chains" value="d=1-180"/>
</dbReference>
<dbReference type="PDB" id="7PIA">
    <property type="method" value="EM"/>
    <property type="resolution" value="13.60 A"/>
    <property type="chains" value="d=1-180"/>
</dbReference>
<dbReference type="PDB" id="7PIB">
    <property type="method" value="EM"/>
    <property type="resolution" value="4.70 A"/>
    <property type="chains" value="d=1-180"/>
</dbReference>
<dbReference type="PDB" id="7PIC">
    <property type="method" value="EM"/>
    <property type="resolution" value="9.10 A"/>
    <property type="chains" value="d=1-180"/>
</dbReference>
<dbReference type="PDB" id="7PIO">
    <property type="method" value="EM"/>
    <property type="resolution" value="9.50 A"/>
    <property type="chains" value="d=1-180"/>
</dbReference>
<dbReference type="PDB" id="7PIP">
    <property type="method" value="EM"/>
    <property type="resolution" value="9.30 A"/>
    <property type="chains" value="d=1-180"/>
</dbReference>
<dbReference type="PDB" id="7PIQ">
    <property type="method" value="EM"/>
    <property type="resolution" value="9.70 A"/>
    <property type="chains" value="d=1-180"/>
</dbReference>
<dbReference type="PDB" id="7PIR">
    <property type="method" value="EM"/>
    <property type="resolution" value="12.10 A"/>
    <property type="chains" value="d=1-180"/>
</dbReference>
<dbReference type="PDB" id="7PIS">
    <property type="method" value="EM"/>
    <property type="resolution" value="15.00 A"/>
    <property type="chains" value="d=1-180"/>
</dbReference>
<dbReference type="PDB" id="7PIT">
    <property type="method" value="EM"/>
    <property type="resolution" value="5.70 A"/>
    <property type="chains" value="d=1-180"/>
</dbReference>
<dbReference type="PDB" id="8P7X">
    <property type="method" value="EM"/>
    <property type="resolution" value="3.03 A"/>
    <property type="chains" value="d=1-180"/>
</dbReference>
<dbReference type="PDB" id="8P7Y">
    <property type="method" value="EM"/>
    <property type="resolution" value="3.70 A"/>
    <property type="chains" value="d=1-180"/>
</dbReference>
<dbReference type="PDB" id="8P8B">
    <property type="method" value="EM"/>
    <property type="resolution" value="2.90 A"/>
    <property type="chains" value="d=1-180"/>
</dbReference>
<dbReference type="PDB" id="8P8V">
    <property type="method" value="EM"/>
    <property type="resolution" value="8.70 A"/>
    <property type="chains" value="d=1-180"/>
</dbReference>
<dbReference type="PDB" id="8P8W">
    <property type="method" value="EM"/>
    <property type="resolution" value="8.70 A"/>
    <property type="chains" value="d=1-180"/>
</dbReference>
<dbReference type="PDBsum" id="7OOD"/>
<dbReference type="PDBsum" id="7P6Z"/>
<dbReference type="PDBsum" id="7PAH"/>
<dbReference type="PDBsum" id="7PAI"/>
<dbReference type="PDBsum" id="7PAJ"/>
<dbReference type="PDBsum" id="7PAK"/>
<dbReference type="PDBsum" id="7PAL"/>
<dbReference type="PDBsum" id="7PAM"/>
<dbReference type="PDBsum" id="7PAN"/>
<dbReference type="PDBsum" id="7PAO"/>
<dbReference type="PDBsum" id="7PAQ"/>
<dbReference type="PDBsum" id="7PAR"/>
<dbReference type="PDBsum" id="7PAS"/>
<dbReference type="PDBsum" id="7PAT"/>
<dbReference type="PDBsum" id="7PAU"/>
<dbReference type="PDBsum" id="7PH9"/>
<dbReference type="PDBsum" id="7PHA"/>
<dbReference type="PDBsum" id="7PHB"/>
<dbReference type="PDBsum" id="7PHC"/>
<dbReference type="PDBsum" id="7PI8"/>
<dbReference type="PDBsum" id="7PI9"/>
<dbReference type="PDBsum" id="7PIA"/>
<dbReference type="PDBsum" id="7PIB"/>
<dbReference type="PDBsum" id="7PIC"/>
<dbReference type="PDBsum" id="7PIO"/>
<dbReference type="PDBsum" id="7PIP"/>
<dbReference type="PDBsum" id="7PIQ"/>
<dbReference type="PDBsum" id="7PIR"/>
<dbReference type="PDBsum" id="7PIS"/>
<dbReference type="PDBsum" id="7PIT"/>
<dbReference type="PDBsum" id="8P7X"/>
<dbReference type="PDBsum" id="8P7Y"/>
<dbReference type="PDBsum" id="8P8B"/>
<dbReference type="PDBsum" id="8P8V"/>
<dbReference type="PDBsum" id="8P8W"/>
<dbReference type="EMDB" id="EMD-13234"/>
<dbReference type="EMDB" id="EMD-13272"/>
<dbReference type="EMDB" id="EMD-13273"/>
<dbReference type="EMDB" id="EMD-13274"/>
<dbReference type="EMDB" id="EMD-13275"/>
<dbReference type="EMDB" id="EMD-13276"/>
<dbReference type="EMDB" id="EMD-13277"/>
<dbReference type="EMDB" id="EMD-13278"/>
<dbReference type="EMDB" id="EMD-13279"/>
<dbReference type="EMDB" id="EMD-13280"/>
<dbReference type="EMDB" id="EMD-13281"/>
<dbReference type="EMDB" id="EMD-13282"/>
<dbReference type="EMDB" id="EMD-13285"/>
<dbReference type="EMDB" id="EMD-13286"/>
<dbReference type="EMDB" id="EMD-13410"/>
<dbReference type="EMDB" id="EMD-13411"/>
<dbReference type="EMDB" id="EMD-13412"/>
<dbReference type="EMDB" id="EMD-13413"/>
<dbReference type="EMDB" id="EMD-13432"/>
<dbReference type="EMDB" id="EMD-13433"/>
<dbReference type="EMDB" id="EMD-13434"/>
<dbReference type="EMDB" id="EMD-13435"/>
<dbReference type="EMDB" id="EMD-13436"/>
<dbReference type="EMDB" id="EMD-13445"/>
<dbReference type="EMDB" id="EMD-13446"/>
<dbReference type="EMDB" id="EMD-13447"/>
<dbReference type="EMDB" id="EMD-13448"/>
<dbReference type="EMDB" id="EMD-13449"/>
<dbReference type="EMDB" id="EMD-13450"/>
<dbReference type="SMR" id="Q50306"/>
<dbReference type="IntAct" id="Q50306">
    <property type="interactions" value="4"/>
</dbReference>
<dbReference type="STRING" id="272634.MPN_177"/>
<dbReference type="EnsemblBacteria" id="AAB96302">
    <property type="protein sequence ID" value="AAB96302"/>
    <property type="gene ID" value="MPN_177"/>
</dbReference>
<dbReference type="KEGG" id="mpn:MPN_177"/>
<dbReference type="PATRIC" id="fig|272634.6.peg.195"/>
<dbReference type="HOGENOM" id="CLU_061015_2_1_14"/>
<dbReference type="OrthoDB" id="9806626at2"/>
<dbReference type="BioCyc" id="MPNE272634:G1GJ3-288-MONOMER"/>
<dbReference type="Proteomes" id="UP000000808">
    <property type="component" value="Chromosome"/>
</dbReference>
<dbReference type="GO" id="GO:1990904">
    <property type="term" value="C:ribonucleoprotein complex"/>
    <property type="evidence" value="ECO:0007669"/>
    <property type="project" value="UniProtKB-KW"/>
</dbReference>
<dbReference type="GO" id="GO:0005840">
    <property type="term" value="C:ribosome"/>
    <property type="evidence" value="ECO:0007669"/>
    <property type="project" value="UniProtKB-KW"/>
</dbReference>
<dbReference type="GO" id="GO:0019843">
    <property type="term" value="F:rRNA binding"/>
    <property type="evidence" value="ECO:0007669"/>
    <property type="project" value="UniProtKB-UniRule"/>
</dbReference>
<dbReference type="GO" id="GO:0003735">
    <property type="term" value="F:structural constituent of ribosome"/>
    <property type="evidence" value="ECO:0007669"/>
    <property type="project" value="InterPro"/>
</dbReference>
<dbReference type="GO" id="GO:0000049">
    <property type="term" value="F:tRNA binding"/>
    <property type="evidence" value="ECO:0007669"/>
    <property type="project" value="UniProtKB-UniRule"/>
</dbReference>
<dbReference type="GO" id="GO:0006412">
    <property type="term" value="P:translation"/>
    <property type="evidence" value="ECO:0007669"/>
    <property type="project" value="UniProtKB-UniRule"/>
</dbReference>
<dbReference type="FunFam" id="3.30.1440.10:FF:000001">
    <property type="entry name" value="50S ribosomal protein L5"/>
    <property type="match status" value="1"/>
</dbReference>
<dbReference type="Gene3D" id="3.30.1440.10">
    <property type="match status" value="1"/>
</dbReference>
<dbReference type="HAMAP" id="MF_01333_B">
    <property type="entry name" value="Ribosomal_uL5_B"/>
    <property type="match status" value="1"/>
</dbReference>
<dbReference type="InterPro" id="IPR002132">
    <property type="entry name" value="Ribosomal_uL5"/>
</dbReference>
<dbReference type="InterPro" id="IPR020930">
    <property type="entry name" value="Ribosomal_uL5_bac-type"/>
</dbReference>
<dbReference type="InterPro" id="IPR031309">
    <property type="entry name" value="Ribosomal_uL5_C"/>
</dbReference>
<dbReference type="InterPro" id="IPR020929">
    <property type="entry name" value="Ribosomal_uL5_CS"/>
</dbReference>
<dbReference type="InterPro" id="IPR022803">
    <property type="entry name" value="Ribosomal_uL5_dom_sf"/>
</dbReference>
<dbReference type="InterPro" id="IPR031310">
    <property type="entry name" value="Ribosomal_uL5_N"/>
</dbReference>
<dbReference type="NCBIfam" id="NF000585">
    <property type="entry name" value="PRK00010.1"/>
    <property type="match status" value="1"/>
</dbReference>
<dbReference type="PANTHER" id="PTHR11994">
    <property type="entry name" value="60S RIBOSOMAL PROTEIN L11-RELATED"/>
    <property type="match status" value="1"/>
</dbReference>
<dbReference type="Pfam" id="PF00281">
    <property type="entry name" value="Ribosomal_L5"/>
    <property type="match status" value="1"/>
</dbReference>
<dbReference type="Pfam" id="PF00673">
    <property type="entry name" value="Ribosomal_L5_C"/>
    <property type="match status" value="1"/>
</dbReference>
<dbReference type="PIRSF" id="PIRSF002161">
    <property type="entry name" value="Ribosomal_L5"/>
    <property type="match status" value="1"/>
</dbReference>
<dbReference type="SUPFAM" id="SSF55282">
    <property type="entry name" value="RL5-like"/>
    <property type="match status" value="1"/>
</dbReference>
<dbReference type="PROSITE" id="PS00358">
    <property type="entry name" value="RIBOSOMAL_L5"/>
    <property type="match status" value="1"/>
</dbReference>
<feature type="chain" id="PRO_0000124954" description="Large ribosomal subunit protein uL5">
    <location>
        <begin position="1"/>
        <end position="180"/>
    </location>
</feature>
<feature type="helix" evidence="4">
    <location>
        <begin position="3"/>
        <end position="20"/>
    </location>
</feature>
<feature type="helix" evidence="4">
    <location>
        <begin position="25"/>
        <end position="27"/>
    </location>
</feature>
<feature type="strand" evidence="4">
    <location>
        <begin position="34"/>
        <end position="38"/>
    </location>
</feature>
<feature type="helix" evidence="4">
    <location>
        <begin position="41"/>
        <end position="44"/>
    </location>
</feature>
<feature type="helix" evidence="4">
    <location>
        <begin position="47"/>
        <end position="61"/>
    </location>
</feature>
<feature type="strand" evidence="4">
    <location>
        <begin position="66"/>
        <end position="69"/>
    </location>
</feature>
<feature type="strand" evidence="3">
    <location>
        <begin position="72"/>
        <end position="74"/>
    </location>
</feature>
<feature type="turn" evidence="4">
    <location>
        <begin position="75"/>
        <end position="78"/>
    </location>
</feature>
<feature type="strand" evidence="3">
    <location>
        <begin position="79"/>
        <end position="81"/>
    </location>
</feature>
<feature type="strand" evidence="4">
    <location>
        <begin position="84"/>
        <end position="91"/>
    </location>
</feature>
<feature type="helix" evidence="4">
    <location>
        <begin position="93"/>
        <end position="105"/>
    </location>
</feature>
<feature type="helix" evidence="4">
    <location>
        <begin position="108"/>
        <end position="110"/>
    </location>
</feature>
<feature type="strand" evidence="4">
    <location>
        <begin position="124"/>
        <end position="126"/>
    </location>
</feature>
<feature type="strand" evidence="4">
    <location>
        <begin position="128"/>
        <end position="132"/>
    </location>
</feature>
<feature type="helix" evidence="3">
    <location>
        <begin position="135"/>
        <end position="137"/>
    </location>
</feature>
<feature type="strand" evidence="4">
    <location>
        <begin position="138"/>
        <end position="140"/>
    </location>
</feature>
<feature type="strand" evidence="4">
    <location>
        <begin position="152"/>
        <end position="156"/>
    </location>
</feature>
<feature type="helix" evidence="4">
    <location>
        <begin position="163"/>
        <end position="173"/>
    </location>
</feature>
<proteinExistence type="evidence at protein level"/>
<reference key="1">
    <citation type="journal article" date="1996" name="Nucleic Acids Res.">
        <title>Sequence analysis of 56 kb from the genome of the bacterium Mycoplasma pneumoniae comprising the dnaA region, the atp operon and a cluster of ribosomal protein genes.</title>
        <authorList>
            <person name="Hilbert H."/>
            <person name="Himmelreich R."/>
            <person name="Plagens H."/>
            <person name="Herrmann R."/>
        </authorList>
    </citation>
    <scope>NUCLEOTIDE SEQUENCE [GENOMIC DNA]</scope>
    <source>
        <strain>ATCC 29342 / M129 / Subtype 1</strain>
    </source>
</reference>
<reference key="2">
    <citation type="journal article" date="1996" name="Nucleic Acids Res.">
        <title>Complete sequence analysis of the genome of the bacterium Mycoplasma pneumoniae.</title>
        <authorList>
            <person name="Himmelreich R."/>
            <person name="Hilbert H."/>
            <person name="Plagens H."/>
            <person name="Pirkl E."/>
            <person name="Li B.-C."/>
            <person name="Herrmann R."/>
        </authorList>
    </citation>
    <scope>NUCLEOTIDE SEQUENCE [LARGE SCALE GENOMIC DNA]</scope>
    <source>
        <strain>ATCC 29342 / M129 / Subtype 1</strain>
    </source>
</reference>